<gene>
    <name evidence="1" type="primary">rph</name>
    <name type="ordered locus">PA5334</name>
</gene>
<reference key="1">
    <citation type="journal article" date="1996" name="J. Bacteriol.">
        <title>The nucleotide sequence of the Pseudomonas aeruginosa pyrE-crc-rph region and the purification of the crc gene product.</title>
        <authorList>
            <person name="Macgregor C.H."/>
            <person name="Arora S.K."/>
            <person name="Hager P.W."/>
            <person name="Dail M.B."/>
            <person name="Phibbs P.V. Jr."/>
        </authorList>
    </citation>
    <scope>NUCLEOTIDE SEQUENCE [GENOMIC DNA]</scope>
    <source>
        <strain>ATCC 15692 / DSM 22644 / CIP 104116 / JCM 14847 / LMG 12228 / 1C / PRS 101 / PAO1</strain>
    </source>
</reference>
<reference key="2">
    <citation type="journal article" date="2000" name="Nature">
        <title>Complete genome sequence of Pseudomonas aeruginosa PAO1, an opportunistic pathogen.</title>
        <authorList>
            <person name="Stover C.K."/>
            <person name="Pham X.-Q.T."/>
            <person name="Erwin A.L."/>
            <person name="Mizoguchi S.D."/>
            <person name="Warrener P."/>
            <person name="Hickey M.J."/>
            <person name="Brinkman F.S.L."/>
            <person name="Hufnagle W.O."/>
            <person name="Kowalik D.J."/>
            <person name="Lagrou M."/>
            <person name="Garber R.L."/>
            <person name="Goltry L."/>
            <person name="Tolentino E."/>
            <person name="Westbrock-Wadman S."/>
            <person name="Yuan Y."/>
            <person name="Brody L.L."/>
            <person name="Coulter S.N."/>
            <person name="Folger K.R."/>
            <person name="Kas A."/>
            <person name="Larbig K."/>
            <person name="Lim R.M."/>
            <person name="Smith K.A."/>
            <person name="Spencer D.H."/>
            <person name="Wong G.K.-S."/>
            <person name="Wu Z."/>
            <person name="Paulsen I.T."/>
            <person name="Reizer J."/>
            <person name="Saier M.H. Jr."/>
            <person name="Hancock R.E.W."/>
            <person name="Lory S."/>
            <person name="Olson M.V."/>
        </authorList>
    </citation>
    <scope>NUCLEOTIDE SEQUENCE [LARGE SCALE GENOMIC DNA]</scope>
    <source>
        <strain>ATCC 15692 / DSM 22644 / CIP 104116 / JCM 14847 / LMG 12228 / 1C / PRS 101 / PAO1</strain>
    </source>
</reference>
<reference evidence="5 6" key="3">
    <citation type="journal article" date="2004" name="J. Biol. Chem.">
        <title>Probing the functional importance of the hexameric ring structure of RNase PH.</title>
        <authorList>
            <person name="Choi J.M."/>
            <person name="Park E.Y."/>
            <person name="Kim J.H."/>
            <person name="Chang S.K."/>
            <person name="Cho Y."/>
        </authorList>
    </citation>
    <scope>X-RAY CRYSTALLOGRAPHY (1.90 ANGSTROMS) WITH AND WITHOUT SUBSTRATE</scope>
    <scope>SUBUNIT</scope>
    <scope>TRNA-BINDING</scope>
    <scope>MUTAGENESIS OF 69-ARG--ARG-77; ARG-69; 74-ARG--ARG-77; ARG-74; ARG-77 AND ARG-127</scope>
</reference>
<name>RNPH_PSEAE</name>
<proteinExistence type="evidence at protein level"/>
<comment type="function">
    <text evidence="1">Phosphorolytic 3'-5' exoribonuclease that plays an important role in tRNA 3'-end maturation. Removes nucleotide residues following the 3'-CCA terminus of tRNAs; can also add nucleotides to the ends of RNA molecules by using nucleoside diphosphates as substrates, but this may not be physiologically important. Probably plays a role in initiation of 16S rRNA degradation (leading to ribosome degradation) during starvation.</text>
</comment>
<comment type="catalytic activity">
    <reaction evidence="1">
        <text>tRNA(n+1) + phosphate = tRNA(n) + a ribonucleoside 5'-diphosphate</text>
        <dbReference type="Rhea" id="RHEA:10628"/>
        <dbReference type="Rhea" id="RHEA-COMP:17343"/>
        <dbReference type="Rhea" id="RHEA-COMP:17344"/>
        <dbReference type="ChEBI" id="CHEBI:43474"/>
        <dbReference type="ChEBI" id="CHEBI:57930"/>
        <dbReference type="ChEBI" id="CHEBI:173114"/>
        <dbReference type="EC" id="2.7.7.56"/>
    </reaction>
</comment>
<comment type="subunit">
    <text evidence="1 4">Homohexameric ring arranged as a trimer of dimers; dimeric protein does not seem to be catalytically active (PubMed:14573594).</text>
</comment>
<comment type="similarity">
    <text evidence="1">Belongs to the RNase PH family.</text>
</comment>
<accession>P50597</accession>
<protein>
    <recommendedName>
        <fullName evidence="1">Ribonuclease PH</fullName>
        <shortName evidence="1">RNase PH</shortName>
        <ecNumber evidence="1">2.7.7.56</ecNumber>
    </recommendedName>
    <alternativeName>
        <fullName evidence="1">tRNA nucleotidyltransferase</fullName>
    </alternativeName>
</protein>
<dbReference type="EC" id="2.7.7.56" evidence="1"/>
<dbReference type="EMBL" id="U38241">
    <property type="protein sequence ID" value="AAC44429.1"/>
    <property type="molecule type" value="Genomic_DNA"/>
</dbReference>
<dbReference type="EMBL" id="AE004091">
    <property type="protein sequence ID" value="AAG08719.1"/>
    <property type="molecule type" value="Genomic_DNA"/>
</dbReference>
<dbReference type="PIR" id="D82978">
    <property type="entry name" value="D82978"/>
</dbReference>
<dbReference type="RefSeq" id="NP_254021.1">
    <property type="nucleotide sequence ID" value="NC_002516.2"/>
</dbReference>
<dbReference type="RefSeq" id="WP_003096595.1">
    <property type="nucleotide sequence ID" value="NZ_QZGE01000020.1"/>
</dbReference>
<dbReference type="PDB" id="1R6L">
    <property type="method" value="X-ray"/>
    <property type="resolution" value="1.90 A"/>
    <property type="chains" value="A=1-239"/>
</dbReference>
<dbReference type="PDB" id="1R6M">
    <property type="method" value="X-ray"/>
    <property type="resolution" value="2.00 A"/>
    <property type="chains" value="A=1-239"/>
</dbReference>
<dbReference type="PDBsum" id="1R6L"/>
<dbReference type="PDBsum" id="1R6M"/>
<dbReference type="SMR" id="P50597"/>
<dbReference type="FunCoup" id="P50597">
    <property type="interactions" value="563"/>
</dbReference>
<dbReference type="STRING" id="208964.PA5334"/>
<dbReference type="DrugBank" id="DB03309">
    <property type="generic name" value="N-cyclohexyltaurine"/>
</dbReference>
<dbReference type="PaxDb" id="208964-PA5334"/>
<dbReference type="DNASU" id="878218"/>
<dbReference type="GeneID" id="77223865"/>
<dbReference type="GeneID" id="878218"/>
<dbReference type="KEGG" id="pae:PA5334"/>
<dbReference type="PATRIC" id="fig|208964.12.peg.5589"/>
<dbReference type="PseudoCAP" id="PA5334"/>
<dbReference type="HOGENOM" id="CLU_050858_0_0_6"/>
<dbReference type="InParanoid" id="P50597"/>
<dbReference type="OrthoDB" id="9802265at2"/>
<dbReference type="PhylomeDB" id="P50597"/>
<dbReference type="BioCyc" id="PAER208964:G1FZ6-5456-MONOMER"/>
<dbReference type="EvolutionaryTrace" id="P50597"/>
<dbReference type="Proteomes" id="UP000002438">
    <property type="component" value="Chromosome"/>
</dbReference>
<dbReference type="GO" id="GO:0000175">
    <property type="term" value="F:3'-5'-RNA exonuclease activity"/>
    <property type="evidence" value="ECO:0007669"/>
    <property type="project" value="UniProtKB-UniRule"/>
</dbReference>
<dbReference type="GO" id="GO:0003723">
    <property type="term" value="F:RNA binding"/>
    <property type="evidence" value="ECO:0000318"/>
    <property type="project" value="GO_Central"/>
</dbReference>
<dbReference type="GO" id="GO:0000049">
    <property type="term" value="F:tRNA binding"/>
    <property type="evidence" value="ECO:0007669"/>
    <property type="project" value="UniProtKB-UniRule"/>
</dbReference>
<dbReference type="GO" id="GO:0009022">
    <property type="term" value="F:tRNA nucleotidyltransferase activity"/>
    <property type="evidence" value="ECO:0007669"/>
    <property type="project" value="UniProtKB-UniRule"/>
</dbReference>
<dbReference type="GO" id="GO:0016075">
    <property type="term" value="P:rRNA catabolic process"/>
    <property type="evidence" value="ECO:0000318"/>
    <property type="project" value="GO_Central"/>
</dbReference>
<dbReference type="GO" id="GO:0006364">
    <property type="term" value="P:rRNA processing"/>
    <property type="evidence" value="ECO:0007669"/>
    <property type="project" value="UniProtKB-KW"/>
</dbReference>
<dbReference type="GO" id="GO:0008033">
    <property type="term" value="P:tRNA processing"/>
    <property type="evidence" value="ECO:0007669"/>
    <property type="project" value="UniProtKB-UniRule"/>
</dbReference>
<dbReference type="CDD" id="cd11362">
    <property type="entry name" value="RNase_PH_bact"/>
    <property type="match status" value="1"/>
</dbReference>
<dbReference type="FunFam" id="3.30.230.70:FF:000003">
    <property type="entry name" value="Ribonuclease PH"/>
    <property type="match status" value="1"/>
</dbReference>
<dbReference type="Gene3D" id="3.30.230.70">
    <property type="entry name" value="GHMP Kinase, N-terminal domain"/>
    <property type="match status" value="1"/>
</dbReference>
<dbReference type="HAMAP" id="MF_00564">
    <property type="entry name" value="RNase_PH"/>
    <property type="match status" value="1"/>
</dbReference>
<dbReference type="InterPro" id="IPR001247">
    <property type="entry name" value="ExoRNase_PH_dom1"/>
</dbReference>
<dbReference type="InterPro" id="IPR015847">
    <property type="entry name" value="ExoRNase_PH_dom2"/>
</dbReference>
<dbReference type="InterPro" id="IPR036345">
    <property type="entry name" value="ExoRNase_PH_dom2_sf"/>
</dbReference>
<dbReference type="InterPro" id="IPR027408">
    <property type="entry name" value="PNPase/RNase_PH_dom_sf"/>
</dbReference>
<dbReference type="InterPro" id="IPR020568">
    <property type="entry name" value="Ribosomal_Su5_D2-typ_SF"/>
</dbReference>
<dbReference type="InterPro" id="IPR050080">
    <property type="entry name" value="RNase_PH"/>
</dbReference>
<dbReference type="InterPro" id="IPR002381">
    <property type="entry name" value="RNase_PH_bac-type"/>
</dbReference>
<dbReference type="InterPro" id="IPR018336">
    <property type="entry name" value="RNase_PH_CS"/>
</dbReference>
<dbReference type="NCBIfam" id="TIGR01966">
    <property type="entry name" value="RNasePH"/>
    <property type="match status" value="1"/>
</dbReference>
<dbReference type="PANTHER" id="PTHR11953">
    <property type="entry name" value="EXOSOME COMPLEX COMPONENT"/>
    <property type="match status" value="1"/>
</dbReference>
<dbReference type="PANTHER" id="PTHR11953:SF0">
    <property type="entry name" value="EXOSOME COMPLEX COMPONENT RRP41"/>
    <property type="match status" value="1"/>
</dbReference>
<dbReference type="Pfam" id="PF01138">
    <property type="entry name" value="RNase_PH"/>
    <property type="match status" value="1"/>
</dbReference>
<dbReference type="Pfam" id="PF03725">
    <property type="entry name" value="RNase_PH_C"/>
    <property type="match status" value="1"/>
</dbReference>
<dbReference type="SUPFAM" id="SSF55666">
    <property type="entry name" value="Ribonuclease PH domain 2-like"/>
    <property type="match status" value="1"/>
</dbReference>
<dbReference type="SUPFAM" id="SSF54211">
    <property type="entry name" value="Ribosomal protein S5 domain 2-like"/>
    <property type="match status" value="1"/>
</dbReference>
<dbReference type="PROSITE" id="PS01277">
    <property type="entry name" value="RIBONUCLEASE_PH"/>
    <property type="match status" value="1"/>
</dbReference>
<organism>
    <name type="scientific">Pseudomonas aeruginosa (strain ATCC 15692 / DSM 22644 / CIP 104116 / JCM 14847 / LMG 12228 / 1C / PRS 101 / PAO1)</name>
    <dbReference type="NCBI Taxonomy" id="208964"/>
    <lineage>
        <taxon>Bacteria</taxon>
        <taxon>Pseudomonadati</taxon>
        <taxon>Pseudomonadota</taxon>
        <taxon>Gammaproteobacteria</taxon>
        <taxon>Pseudomonadales</taxon>
        <taxon>Pseudomonadaceae</taxon>
        <taxon>Pseudomonas</taxon>
    </lineage>
</organism>
<sequence>MNRPSGRAADQLRPIRITRHYTKHAEGSVLVEFGDTKVICTVSAESGVPRFLKGQGQGWLTAEYGMLPRSTGERNQREASRGKQGGRTLEIQRLIGRSLRAALDLSKLGENTLYIDCDVIQADGGTRTASITGATVALIDALAVLKKRGALKGNPLKQMVAAVSVGIYQGVPVLDLDYLEDSAAETDLNVVMTDAGGFIEVQGTAEGAPFRPAELNAMLELAQQGMQELFELQRAALAE</sequence>
<evidence type="ECO:0000255" key="1">
    <source>
        <dbReference type="HAMAP-Rule" id="MF_00564"/>
    </source>
</evidence>
<evidence type="ECO:0000269" key="2">
    <source>
    </source>
</evidence>
<evidence type="ECO:0000305" key="3"/>
<evidence type="ECO:0000305" key="4">
    <source>
    </source>
</evidence>
<evidence type="ECO:0007744" key="5">
    <source>
        <dbReference type="PDB" id="1R6L"/>
    </source>
</evidence>
<evidence type="ECO:0007744" key="6">
    <source>
        <dbReference type="PDB" id="1R6M"/>
    </source>
</evidence>
<evidence type="ECO:0007829" key="7">
    <source>
        <dbReference type="PDB" id="1R6L"/>
    </source>
</evidence>
<keyword id="KW-0002">3D-structure</keyword>
<keyword id="KW-0548">Nucleotidyltransferase</keyword>
<keyword id="KW-1185">Reference proteome</keyword>
<keyword id="KW-0694">RNA-binding</keyword>
<keyword id="KW-0698">rRNA processing</keyword>
<keyword id="KW-0808">Transferase</keyword>
<keyword id="KW-0819">tRNA processing</keyword>
<keyword id="KW-0820">tRNA-binding</keyword>
<feature type="chain" id="PRO_0000139924" description="Ribonuclease PH">
    <location>
        <begin position="1"/>
        <end position="239"/>
    </location>
</feature>
<feature type="binding site" evidence="1 2">
    <location>
        <position position="87"/>
    </location>
    <ligand>
        <name>phosphate</name>
        <dbReference type="ChEBI" id="CHEBI:43474"/>
        <note>substrate</note>
    </ligand>
</feature>
<feature type="binding site" evidence="1 2">
    <location>
        <begin position="125"/>
        <end position="127"/>
    </location>
    <ligand>
        <name>phosphate</name>
        <dbReference type="ChEBI" id="CHEBI:43474"/>
        <note>substrate</note>
    </ligand>
</feature>
<feature type="mutagenesis site" description="No longer forms hexamers, no exonuclease activity, does not bind pre-tRNA." evidence="2">
    <original>RSTGERNQR</original>
    <variation>SSTGERNQS</variation>
    <location>
        <begin position="69"/>
        <end position="77"/>
    </location>
</feature>
<feature type="mutagenesis site" description="Still forms hexamers, wild-type exonuclease activity at 30 degrees Celsius, nearly wild-type at 50 degrees Celsius, decreased binding of pre-tRNA." evidence="2">
    <original>R</original>
    <variation>S</variation>
    <location>
        <position position="69"/>
    </location>
</feature>
<feature type="mutagenesis site" description="No longer forms hexamers, no exonuclease activity, does not bind pre-tRNA." evidence="2">
    <original>RNQR</original>
    <variation>SNQS</variation>
    <location>
        <begin position="74"/>
        <end position="77"/>
    </location>
</feature>
<feature type="mutagenesis site" description="No longer forms hexamers, no exonuclease activity, does not bind pre-tRNA." evidence="2">
    <original>R</original>
    <variation>S</variation>
    <location>
        <position position="74"/>
    </location>
</feature>
<feature type="mutagenesis site" description="Still forms hexamers, no exonuclease activity, does not bind pre-tRNA." evidence="2">
    <original>R</original>
    <variation>S</variation>
    <location>
        <position position="77"/>
    </location>
</feature>
<feature type="mutagenesis site" description="Still forms hexamers, wild-type exonuclease activity at 30 degrees Celsius, significantly reduced activity at 50 degrees Celsius, binds pre-tRNA." evidence="2">
    <original>R</original>
    <variation>A</variation>
    <location>
        <position position="127"/>
    </location>
</feature>
<feature type="sequence conflict" description="In Ref. 1; AAC44429." evidence="3" ref="1">
    <original>P</original>
    <variation>R</variation>
    <location>
        <position position="68"/>
    </location>
</feature>
<feature type="sequence conflict" description="In Ref. 1; AAC44429." evidence="3" ref="1">
    <original>G</original>
    <variation>D</variation>
    <location>
        <position position="96"/>
    </location>
</feature>
<feature type="sequence conflict" description="In Ref. 1; AAC44429." evidence="3" ref="1">
    <original>A</original>
    <variation>T</variation>
    <location>
        <position position="122"/>
    </location>
</feature>
<feature type="sequence conflict" description="In Ref. 1; AAC44429." evidence="3" ref="1">
    <original>A</original>
    <variation>S</variation>
    <location>
        <position position="137"/>
    </location>
</feature>
<feature type="sequence conflict" description="In Ref. 1; AAC44429." evidence="3" ref="1">
    <original>G</original>
    <variation>V</variation>
    <location>
        <position position="149"/>
    </location>
</feature>
<feature type="sequence conflict" description="In Ref. 1; AAC44429." evidence="3" ref="1">
    <original>M</original>
    <variation>I</variation>
    <location>
        <position position="159"/>
    </location>
</feature>
<feature type="sequence conflict" description="In Ref. 1; AAC44429." evidence="3" ref="1">
    <original>T</original>
    <variation>S</variation>
    <location>
        <position position="186"/>
    </location>
</feature>
<feature type="sequence conflict" description="In Ref. 1; AAC44429." evidence="3" ref="1">
    <original>AGG</original>
    <variation>CRR</variation>
    <location>
        <begin position="195"/>
        <end position="197"/>
    </location>
</feature>
<feature type="sequence conflict" description="In Ref. 1; AAC44429." evidence="3" ref="1">
    <original>FEL</original>
    <variation>VRT</variation>
    <location>
        <begin position="230"/>
        <end position="232"/>
    </location>
</feature>
<feature type="strand" evidence="7">
    <location>
        <begin position="15"/>
        <end position="20"/>
    </location>
</feature>
<feature type="strand" evidence="7">
    <location>
        <begin position="22"/>
        <end position="33"/>
    </location>
</feature>
<feature type="strand" evidence="7">
    <location>
        <begin position="36"/>
        <end position="47"/>
    </location>
</feature>
<feature type="strand" evidence="7">
    <location>
        <begin position="59"/>
        <end position="66"/>
    </location>
</feature>
<feature type="strand" evidence="7">
    <location>
        <begin position="70"/>
        <end position="73"/>
    </location>
</feature>
<feature type="helix" evidence="7">
    <location>
        <begin position="78"/>
        <end position="81"/>
    </location>
</feature>
<feature type="helix" evidence="7">
    <location>
        <begin position="86"/>
        <end position="101"/>
    </location>
</feature>
<feature type="helix" evidence="7">
    <location>
        <begin position="105"/>
        <end position="107"/>
    </location>
</feature>
<feature type="strand" evidence="7">
    <location>
        <begin position="110"/>
        <end position="121"/>
    </location>
</feature>
<feature type="helix" evidence="7">
    <location>
        <begin position="126"/>
        <end position="147"/>
    </location>
</feature>
<feature type="strand" evidence="7">
    <location>
        <begin position="160"/>
        <end position="168"/>
    </location>
</feature>
<feature type="strand" evidence="7">
    <location>
        <begin position="171"/>
        <end position="175"/>
    </location>
</feature>
<feature type="helix" evidence="7">
    <location>
        <begin position="178"/>
        <end position="183"/>
    </location>
</feature>
<feature type="strand" evidence="7">
    <location>
        <begin position="185"/>
        <end position="193"/>
    </location>
</feature>
<feature type="strand" evidence="7">
    <location>
        <begin position="198"/>
        <end position="208"/>
    </location>
</feature>
<feature type="helix" evidence="7">
    <location>
        <begin position="212"/>
        <end position="237"/>
    </location>
</feature>